<feature type="chain" id="PRO_1000074215" description="Probable tRNA sulfurtransferase">
    <location>
        <begin position="1"/>
        <end position="391"/>
    </location>
</feature>
<feature type="domain" description="THUMP" evidence="1">
    <location>
        <begin position="60"/>
        <end position="167"/>
    </location>
</feature>
<feature type="binding site" evidence="1">
    <location>
        <begin position="184"/>
        <end position="185"/>
    </location>
    <ligand>
        <name>ATP</name>
        <dbReference type="ChEBI" id="CHEBI:30616"/>
    </ligand>
</feature>
<feature type="binding site" evidence="1">
    <location>
        <begin position="209"/>
        <end position="210"/>
    </location>
    <ligand>
        <name>ATP</name>
        <dbReference type="ChEBI" id="CHEBI:30616"/>
    </ligand>
</feature>
<feature type="binding site" evidence="1">
    <location>
        <position position="266"/>
    </location>
    <ligand>
        <name>ATP</name>
        <dbReference type="ChEBI" id="CHEBI:30616"/>
    </ligand>
</feature>
<feature type="binding site" evidence="1">
    <location>
        <position position="288"/>
    </location>
    <ligand>
        <name>ATP</name>
        <dbReference type="ChEBI" id="CHEBI:30616"/>
    </ligand>
</feature>
<feature type="binding site" evidence="1">
    <location>
        <position position="297"/>
    </location>
    <ligand>
        <name>ATP</name>
        <dbReference type="ChEBI" id="CHEBI:30616"/>
    </ligand>
</feature>
<reference key="1">
    <citation type="submission" date="2007-11" db="EMBL/GenBank/DDBJ databases">
        <title>Complete genome sequence of Clostridium phytofermentans ISDg.</title>
        <authorList>
            <person name="Leschine S.B."/>
            <person name="Warnick T.A."/>
            <person name="Blanchard J.L."/>
            <person name="Schnell D.J."/>
            <person name="Petit E.L."/>
            <person name="LaTouf W.G."/>
            <person name="Copeland A."/>
            <person name="Lucas S."/>
            <person name="Lapidus A."/>
            <person name="Barry K."/>
            <person name="Glavina del Rio T."/>
            <person name="Dalin E."/>
            <person name="Tice H."/>
            <person name="Pitluck S."/>
            <person name="Kiss H."/>
            <person name="Brettin T."/>
            <person name="Bruce D."/>
            <person name="Detter J.C."/>
            <person name="Han C."/>
            <person name="Kuske C."/>
            <person name="Schmutz J."/>
            <person name="Larimer F."/>
            <person name="Land M."/>
            <person name="Hauser L."/>
            <person name="Kyrpides N."/>
            <person name="Kim E.A."/>
            <person name="Richardson P."/>
        </authorList>
    </citation>
    <scope>NUCLEOTIDE SEQUENCE [LARGE SCALE GENOMIC DNA]</scope>
    <source>
        <strain>ATCC 700394 / DSM 18823 / ISDg</strain>
    </source>
</reference>
<organism>
    <name type="scientific">Lachnoclostridium phytofermentans (strain ATCC 700394 / DSM 18823 / ISDg)</name>
    <name type="common">Clostridium phytofermentans</name>
    <dbReference type="NCBI Taxonomy" id="357809"/>
    <lineage>
        <taxon>Bacteria</taxon>
        <taxon>Bacillati</taxon>
        <taxon>Bacillota</taxon>
        <taxon>Clostridia</taxon>
        <taxon>Lachnospirales</taxon>
        <taxon>Lachnospiraceae</taxon>
    </lineage>
</organism>
<dbReference type="EC" id="2.8.1.4" evidence="1"/>
<dbReference type="EMBL" id="CP000885">
    <property type="protein sequence ID" value="ABX42662.1"/>
    <property type="molecule type" value="Genomic_DNA"/>
</dbReference>
<dbReference type="RefSeq" id="WP_012200316.1">
    <property type="nucleotide sequence ID" value="NC_010001.1"/>
</dbReference>
<dbReference type="SMR" id="A9KKT0"/>
<dbReference type="STRING" id="357809.Cphy_2301"/>
<dbReference type="KEGG" id="cpy:Cphy_2301"/>
<dbReference type="eggNOG" id="COG0301">
    <property type="taxonomic scope" value="Bacteria"/>
</dbReference>
<dbReference type="HOGENOM" id="CLU_037952_4_0_9"/>
<dbReference type="OrthoDB" id="9773948at2"/>
<dbReference type="UniPathway" id="UPA00060"/>
<dbReference type="Proteomes" id="UP000000370">
    <property type="component" value="Chromosome"/>
</dbReference>
<dbReference type="GO" id="GO:0005829">
    <property type="term" value="C:cytosol"/>
    <property type="evidence" value="ECO:0007669"/>
    <property type="project" value="TreeGrafter"/>
</dbReference>
<dbReference type="GO" id="GO:0005524">
    <property type="term" value="F:ATP binding"/>
    <property type="evidence" value="ECO:0007669"/>
    <property type="project" value="UniProtKB-UniRule"/>
</dbReference>
<dbReference type="GO" id="GO:0004810">
    <property type="term" value="F:CCA tRNA nucleotidyltransferase activity"/>
    <property type="evidence" value="ECO:0007669"/>
    <property type="project" value="InterPro"/>
</dbReference>
<dbReference type="GO" id="GO:0000049">
    <property type="term" value="F:tRNA binding"/>
    <property type="evidence" value="ECO:0007669"/>
    <property type="project" value="UniProtKB-UniRule"/>
</dbReference>
<dbReference type="GO" id="GO:0140741">
    <property type="term" value="F:tRNA-uracil-4 sulfurtransferase activity"/>
    <property type="evidence" value="ECO:0007669"/>
    <property type="project" value="UniProtKB-EC"/>
</dbReference>
<dbReference type="GO" id="GO:0009228">
    <property type="term" value="P:thiamine biosynthetic process"/>
    <property type="evidence" value="ECO:0007669"/>
    <property type="project" value="UniProtKB-KW"/>
</dbReference>
<dbReference type="GO" id="GO:0009229">
    <property type="term" value="P:thiamine diphosphate biosynthetic process"/>
    <property type="evidence" value="ECO:0007669"/>
    <property type="project" value="UniProtKB-UniRule"/>
</dbReference>
<dbReference type="GO" id="GO:0052837">
    <property type="term" value="P:thiazole biosynthetic process"/>
    <property type="evidence" value="ECO:0007669"/>
    <property type="project" value="TreeGrafter"/>
</dbReference>
<dbReference type="GO" id="GO:0002937">
    <property type="term" value="P:tRNA 4-thiouridine biosynthesis"/>
    <property type="evidence" value="ECO:0007669"/>
    <property type="project" value="TreeGrafter"/>
</dbReference>
<dbReference type="CDD" id="cd01712">
    <property type="entry name" value="PPase_ThiI"/>
    <property type="match status" value="1"/>
</dbReference>
<dbReference type="CDD" id="cd11716">
    <property type="entry name" value="THUMP_ThiI"/>
    <property type="match status" value="1"/>
</dbReference>
<dbReference type="FunFam" id="3.40.50.620:FF:000053">
    <property type="entry name" value="Probable tRNA sulfurtransferase"/>
    <property type="match status" value="1"/>
</dbReference>
<dbReference type="Gene3D" id="3.30.2130.30">
    <property type="match status" value="1"/>
</dbReference>
<dbReference type="Gene3D" id="3.40.50.620">
    <property type="entry name" value="HUPs"/>
    <property type="match status" value="1"/>
</dbReference>
<dbReference type="HAMAP" id="MF_00021">
    <property type="entry name" value="ThiI"/>
    <property type="match status" value="1"/>
</dbReference>
<dbReference type="InterPro" id="IPR014729">
    <property type="entry name" value="Rossmann-like_a/b/a_fold"/>
</dbReference>
<dbReference type="InterPro" id="IPR020536">
    <property type="entry name" value="ThiI_AANH"/>
</dbReference>
<dbReference type="InterPro" id="IPR054173">
    <property type="entry name" value="ThiI_fer"/>
</dbReference>
<dbReference type="InterPro" id="IPR049961">
    <property type="entry name" value="ThiI_N"/>
</dbReference>
<dbReference type="InterPro" id="IPR004114">
    <property type="entry name" value="THUMP_dom"/>
</dbReference>
<dbReference type="InterPro" id="IPR049962">
    <property type="entry name" value="THUMP_ThiI"/>
</dbReference>
<dbReference type="InterPro" id="IPR003720">
    <property type="entry name" value="tRNA_STrfase"/>
</dbReference>
<dbReference type="InterPro" id="IPR050102">
    <property type="entry name" value="tRNA_sulfurtransferase_ThiI"/>
</dbReference>
<dbReference type="NCBIfam" id="TIGR00342">
    <property type="entry name" value="tRNA uracil 4-sulfurtransferase ThiI"/>
    <property type="match status" value="1"/>
</dbReference>
<dbReference type="PANTHER" id="PTHR43209">
    <property type="entry name" value="TRNA SULFURTRANSFERASE"/>
    <property type="match status" value="1"/>
</dbReference>
<dbReference type="PANTHER" id="PTHR43209:SF1">
    <property type="entry name" value="TRNA SULFURTRANSFERASE"/>
    <property type="match status" value="1"/>
</dbReference>
<dbReference type="Pfam" id="PF02568">
    <property type="entry name" value="ThiI"/>
    <property type="match status" value="1"/>
</dbReference>
<dbReference type="Pfam" id="PF22025">
    <property type="entry name" value="ThiI_fer"/>
    <property type="match status" value="1"/>
</dbReference>
<dbReference type="Pfam" id="PF02926">
    <property type="entry name" value="THUMP"/>
    <property type="match status" value="1"/>
</dbReference>
<dbReference type="SMART" id="SM00981">
    <property type="entry name" value="THUMP"/>
    <property type="match status" value="1"/>
</dbReference>
<dbReference type="SUPFAM" id="SSF52402">
    <property type="entry name" value="Adenine nucleotide alpha hydrolases-like"/>
    <property type="match status" value="1"/>
</dbReference>
<dbReference type="SUPFAM" id="SSF143437">
    <property type="entry name" value="THUMP domain-like"/>
    <property type="match status" value="1"/>
</dbReference>
<dbReference type="PROSITE" id="PS51165">
    <property type="entry name" value="THUMP"/>
    <property type="match status" value="1"/>
</dbReference>
<gene>
    <name evidence="1" type="primary">thiI</name>
    <name type="ordered locus">Cphy_2301</name>
</gene>
<name>THII_LACP7</name>
<sequence>MYKAFLIKYAEIGLKGKNRHIFENALKDQIRFNLNKLGNFEVSREQGRVFVECPDDFDYDETVAALQRVFGITGISPVIVINSTDWEDIKQEVGDYVEKFYGRKPFTFKVEAKRGNKQYPIQSPEICSKMGAYLLDRFPELSVDVHTPQEYITVEVRNKAYVYSNTLKGPGGMPVGTGGKAMLLLSGGIDSPVAGYMISKRGVTIEATYFHAPPYTSERAKQKVVDLAKIISAYTGPIKLHVVNFTDIQLYIYEKCPHEELTIIMRRYMMKIAESIANRSKCLGLITGESIGQVASQTMQSLAATNAVCTMPVYRPLIGMDKQEIIDISERIGTFETSVLPFEDCCTIFVAKHPVTRPILSVIEKNELNLSEKIDELVKTALETREVITVK</sequence>
<accession>A9KKT0</accession>
<comment type="function">
    <text evidence="1">Catalyzes the ATP-dependent transfer of a sulfur to tRNA to produce 4-thiouridine in position 8 of tRNAs, which functions as a near-UV photosensor. Also catalyzes the transfer of sulfur to the sulfur carrier protein ThiS, forming ThiS-thiocarboxylate. This is a step in the synthesis of thiazole, in the thiamine biosynthesis pathway. The sulfur is donated as persulfide by IscS.</text>
</comment>
<comment type="catalytic activity">
    <reaction evidence="1">
        <text>[ThiI sulfur-carrier protein]-S-sulfanyl-L-cysteine + a uridine in tRNA + 2 reduced [2Fe-2S]-[ferredoxin] + ATP + H(+) = [ThiI sulfur-carrier protein]-L-cysteine + a 4-thiouridine in tRNA + 2 oxidized [2Fe-2S]-[ferredoxin] + AMP + diphosphate</text>
        <dbReference type="Rhea" id="RHEA:24176"/>
        <dbReference type="Rhea" id="RHEA-COMP:10000"/>
        <dbReference type="Rhea" id="RHEA-COMP:10001"/>
        <dbReference type="Rhea" id="RHEA-COMP:13337"/>
        <dbReference type="Rhea" id="RHEA-COMP:13338"/>
        <dbReference type="Rhea" id="RHEA-COMP:13339"/>
        <dbReference type="Rhea" id="RHEA-COMP:13340"/>
        <dbReference type="ChEBI" id="CHEBI:15378"/>
        <dbReference type="ChEBI" id="CHEBI:29950"/>
        <dbReference type="ChEBI" id="CHEBI:30616"/>
        <dbReference type="ChEBI" id="CHEBI:33019"/>
        <dbReference type="ChEBI" id="CHEBI:33737"/>
        <dbReference type="ChEBI" id="CHEBI:33738"/>
        <dbReference type="ChEBI" id="CHEBI:61963"/>
        <dbReference type="ChEBI" id="CHEBI:65315"/>
        <dbReference type="ChEBI" id="CHEBI:136798"/>
        <dbReference type="ChEBI" id="CHEBI:456215"/>
        <dbReference type="EC" id="2.8.1.4"/>
    </reaction>
</comment>
<comment type="catalytic activity">
    <reaction evidence="1">
        <text>[ThiS sulfur-carrier protein]-C-terminal Gly-Gly-AMP + S-sulfanyl-L-cysteinyl-[cysteine desulfurase] + AH2 = [ThiS sulfur-carrier protein]-C-terminal-Gly-aminoethanethioate + L-cysteinyl-[cysteine desulfurase] + A + AMP + 2 H(+)</text>
        <dbReference type="Rhea" id="RHEA:43340"/>
        <dbReference type="Rhea" id="RHEA-COMP:12157"/>
        <dbReference type="Rhea" id="RHEA-COMP:12158"/>
        <dbReference type="Rhea" id="RHEA-COMP:12910"/>
        <dbReference type="Rhea" id="RHEA-COMP:19908"/>
        <dbReference type="ChEBI" id="CHEBI:13193"/>
        <dbReference type="ChEBI" id="CHEBI:15378"/>
        <dbReference type="ChEBI" id="CHEBI:17499"/>
        <dbReference type="ChEBI" id="CHEBI:29950"/>
        <dbReference type="ChEBI" id="CHEBI:61963"/>
        <dbReference type="ChEBI" id="CHEBI:90618"/>
        <dbReference type="ChEBI" id="CHEBI:232372"/>
        <dbReference type="ChEBI" id="CHEBI:456215"/>
    </reaction>
</comment>
<comment type="pathway">
    <text evidence="1">Cofactor biosynthesis; thiamine diphosphate biosynthesis.</text>
</comment>
<comment type="subcellular location">
    <subcellularLocation>
        <location evidence="1">Cytoplasm</location>
    </subcellularLocation>
</comment>
<comment type="similarity">
    <text evidence="1">Belongs to the ThiI family.</text>
</comment>
<evidence type="ECO:0000255" key="1">
    <source>
        <dbReference type="HAMAP-Rule" id="MF_00021"/>
    </source>
</evidence>
<proteinExistence type="inferred from homology"/>
<keyword id="KW-0067">ATP-binding</keyword>
<keyword id="KW-0963">Cytoplasm</keyword>
<keyword id="KW-0547">Nucleotide-binding</keyword>
<keyword id="KW-1185">Reference proteome</keyword>
<keyword id="KW-0694">RNA-binding</keyword>
<keyword id="KW-0784">Thiamine biosynthesis</keyword>
<keyword id="KW-0808">Transferase</keyword>
<keyword id="KW-0820">tRNA-binding</keyword>
<protein>
    <recommendedName>
        <fullName evidence="1">Probable tRNA sulfurtransferase</fullName>
        <ecNumber evidence="1">2.8.1.4</ecNumber>
    </recommendedName>
    <alternativeName>
        <fullName evidence="1">Sulfur carrier protein ThiS sulfurtransferase</fullName>
    </alternativeName>
    <alternativeName>
        <fullName evidence="1">Thiamine biosynthesis protein ThiI</fullName>
    </alternativeName>
    <alternativeName>
        <fullName evidence="1">tRNA 4-thiouridine synthase</fullName>
    </alternativeName>
</protein>